<accession>O83384</accession>
<protein>
    <recommendedName>
        <fullName>Uncharacterized protein TP_0369</fullName>
    </recommendedName>
</protein>
<gene>
    <name type="ordered locus">TP_0369</name>
</gene>
<dbReference type="EMBL" id="AE000520">
    <property type="protein sequence ID" value="AAC65360.1"/>
    <property type="molecule type" value="Genomic_DNA"/>
</dbReference>
<dbReference type="PIR" id="H71332">
    <property type="entry name" value="H71332"/>
</dbReference>
<dbReference type="SMR" id="O83384"/>
<dbReference type="STRING" id="243276.TP_0369"/>
<dbReference type="EnsemblBacteria" id="AAC65360">
    <property type="protein sequence ID" value="AAC65360"/>
    <property type="gene ID" value="TP_0369"/>
</dbReference>
<dbReference type="KEGG" id="tpa:TP_0369"/>
<dbReference type="KEGG" id="tpw:TPANIC_0369"/>
<dbReference type="eggNOG" id="COG4105">
    <property type="taxonomic scope" value="Bacteria"/>
</dbReference>
<dbReference type="HOGENOM" id="CLU_532002_0_0_12"/>
<dbReference type="OrthoDB" id="360241at2"/>
<dbReference type="Proteomes" id="UP000000811">
    <property type="component" value="Chromosome"/>
</dbReference>
<dbReference type="Gene3D" id="1.25.40.10">
    <property type="entry name" value="Tetratricopeptide repeat domain"/>
    <property type="match status" value="1"/>
</dbReference>
<dbReference type="InterPro" id="IPR039565">
    <property type="entry name" value="BamD-like"/>
</dbReference>
<dbReference type="InterPro" id="IPR011990">
    <property type="entry name" value="TPR-like_helical_dom_sf"/>
</dbReference>
<dbReference type="Pfam" id="PF13525">
    <property type="entry name" value="YfiO"/>
    <property type="match status" value="1"/>
</dbReference>
<dbReference type="SUPFAM" id="SSF48452">
    <property type="entry name" value="TPR-like"/>
    <property type="match status" value="1"/>
</dbReference>
<keyword id="KW-1185">Reference proteome</keyword>
<keyword id="KW-0732">Signal</keyword>
<evidence type="ECO:0000255" key="1"/>
<evidence type="ECO:0000256" key="2">
    <source>
        <dbReference type="SAM" id="MobiDB-lite"/>
    </source>
</evidence>
<sequence>MSVWVALALLGMCVSCTHVPPPRALIVSKEPPPALDSAPRPAIPEAVPLPSPVEEEIAGRLPPAPAAAPERVPESSQEREQKPESSKPQVVEPVSLASPVKPREAGSVPDVLPVPEVSSPHVAPPAPPAPTAPRPHRPSPPPVSPSASKPKQRAVPPSPPPASEPPREAEVQAEPEPAEDSPRAMVPEEPPEDEVPRVSRAVQLAVGQKLEVLYPGEGWVYVGEHTAQPGLRYHQRKLEESHSLFTFSAEREGDFVLAFSYFDVFRGDFVSDALAVKVVPKREGLARVVRAPEYRRTVSSPPDTVVSELSPAGTGTERRAEESGTSGSQRAAAHTGAPVRQDQTDTAVAEKAQHGTPRPDEKKDREPTVGGRDPVPSDAVAQGVSERYSPRKISPASQPSAPSAAPIEAHVPASAHKEGQEKRDHLAEARQFCAQGNARDALASLGDFFAQFPSHERMDEAWFLRGQAYEINGAQRNVRLALEAYKTILERFPHSPYWKKADERARFIKNFFIKIS</sequence>
<reference key="1">
    <citation type="journal article" date="1998" name="Science">
        <title>Complete genome sequence of Treponema pallidum, the syphilis spirochete.</title>
        <authorList>
            <person name="Fraser C.M."/>
            <person name="Norris S.J."/>
            <person name="Weinstock G.M."/>
            <person name="White O."/>
            <person name="Sutton G.G."/>
            <person name="Dodson R.J."/>
            <person name="Gwinn M.L."/>
            <person name="Hickey E.K."/>
            <person name="Clayton R.A."/>
            <person name="Ketchum K.A."/>
            <person name="Sodergren E."/>
            <person name="Hardham J.M."/>
            <person name="McLeod M.P."/>
            <person name="Salzberg S.L."/>
            <person name="Peterson J.D."/>
            <person name="Khalak H.G."/>
            <person name="Richardson D.L."/>
            <person name="Howell J.K."/>
            <person name="Chidambaram M."/>
            <person name="Utterback T.R."/>
            <person name="McDonald L.A."/>
            <person name="Artiach P."/>
            <person name="Bowman C."/>
            <person name="Cotton M.D."/>
            <person name="Fujii C."/>
            <person name="Garland S.A."/>
            <person name="Hatch B."/>
            <person name="Horst K."/>
            <person name="Roberts K.M."/>
            <person name="Sandusky M."/>
            <person name="Weidman J.F."/>
            <person name="Smith H.O."/>
            <person name="Venter J.C."/>
        </authorList>
    </citation>
    <scope>NUCLEOTIDE SEQUENCE [LARGE SCALE GENOMIC DNA]</scope>
    <source>
        <strain>Nichols</strain>
    </source>
</reference>
<name>Y369_TREPA</name>
<proteinExistence type="inferred from homology"/>
<feature type="signal peptide" evidence="1">
    <location>
        <begin position="1"/>
        <end position="17"/>
    </location>
</feature>
<feature type="chain" id="PRO_0000014246" description="Uncharacterized protein TP_0369">
    <location>
        <begin position="18"/>
        <end position="516"/>
    </location>
</feature>
<feature type="region of interest" description="Disordered" evidence="2">
    <location>
        <begin position="29"/>
        <end position="197"/>
    </location>
</feature>
<feature type="region of interest" description="Disordered" evidence="2">
    <location>
        <begin position="296"/>
        <end position="426"/>
    </location>
</feature>
<feature type="compositionally biased region" description="Basic and acidic residues" evidence="2">
    <location>
        <begin position="71"/>
        <end position="85"/>
    </location>
</feature>
<feature type="compositionally biased region" description="Pro residues" evidence="2">
    <location>
        <begin position="122"/>
        <end position="144"/>
    </location>
</feature>
<feature type="compositionally biased region" description="Low complexity" evidence="2">
    <location>
        <begin position="145"/>
        <end position="155"/>
    </location>
</feature>
<feature type="compositionally biased region" description="Basic and acidic residues" evidence="2">
    <location>
        <begin position="351"/>
        <end position="367"/>
    </location>
</feature>
<feature type="compositionally biased region" description="Low complexity" evidence="2">
    <location>
        <begin position="394"/>
        <end position="406"/>
    </location>
</feature>
<feature type="compositionally biased region" description="Basic and acidic residues" evidence="2">
    <location>
        <begin position="415"/>
        <end position="426"/>
    </location>
</feature>
<organism>
    <name type="scientific">Treponema pallidum (strain Nichols)</name>
    <dbReference type="NCBI Taxonomy" id="243276"/>
    <lineage>
        <taxon>Bacteria</taxon>
        <taxon>Pseudomonadati</taxon>
        <taxon>Spirochaetota</taxon>
        <taxon>Spirochaetia</taxon>
        <taxon>Spirochaetales</taxon>
        <taxon>Treponemataceae</taxon>
        <taxon>Treponema</taxon>
    </lineage>
</organism>